<reference key="1">
    <citation type="journal article" date="2006" name="Proc. Natl. Acad. Sci. U.S.A.">
        <title>Burkholderia xenovorans LB400 harbors a multi-replicon, 9.73-Mbp genome shaped for versatility.</title>
        <authorList>
            <person name="Chain P.S.G."/>
            <person name="Denef V.J."/>
            <person name="Konstantinidis K.T."/>
            <person name="Vergez L.M."/>
            <person name="Agullo L."/>
            <person name="Reyes V.L."/>
            <person name="Hauser L."/>
            <person name="Cordova M."/>
            <person name="Gomez L."/>
            <person name="Gonzalez M."/>
            <person name="Land M."/>
            <person name="Lao V."/>
            <person name="Larimer F."/>
            <person name="LiPuma J.J."/>
            <person name="Mahenthiralingam E."/>
            <person name="Malfatti S.A."/>
            <person name="Marx C.J."/>
            <person name="Parnell J.J."/>
            <person name="Ramette A."/>
            <person name="Richardson P."/>
            <person name="Seeger M."/>
            <person name="Smith D."/>
            <person name="Spilker T."/>
            <person name="Sul W.J."/>
            <person name="Tsoi T.V."/>
            <person name="Ulrich L.E."/>
            <person name="Zhulin I.B."/>
            <person name="Tiedje J.M."/>
        </authorList>
    </citation>
    <scope>NUCLEOTIDE SEQUENCE [LARGE SCALE GENOMIC DNA]</scope>
    <source>
        <strain>LB400</strain>
    </source>
</reference>
<organism>
    <name type="scientific">Paraburkholderia xenovorans (strain LB400)</name>
    <dbReference type="NCBI Taxonomy" id="266265"/>
    <lineage>
        <taxon>Bacteria</taxon>
        <taxon>Pseudomonadati</taxon>
        <taxon>Pseudomonadota</taxon>
        <taxon>Betaproteobacteria</taxon>
        <taxon>Burkholderiales</taxon>
        <taxon>Burkholderiaceae</taxon>
        <taxon>Paraburkholderia</taxon>
    </lineage>
</organism>
<comment type="function">
    <text evidence="1">Catalyzes the reversible transfer of the terminal phosphate group between ATP and AMP. Plays an important role in cellular energy homeostasis and in adenine nucleotide metabolism.</text>
</comment>
<comment type="catalytic activity">
    <reaction evidence="1">
        <text>AMP + ATP = 2 ADP</text>
        <dbReference type="Rhea" id="RHEA:12973"/>
        <dbReference type="ChEBI" id="CHEBI:30616"/>
        <dbReference type="ChEBI" id="CHEBI:456215"/>
        <dbReference type="ChEBI" id="CHEBI:456216"/>
        <dbReference type="EC" id="2.7.4.3"/>
    </reaction>
</comment>
<comment type="pathway">
    <text evidence="1">Purine metabolism; AMP biosynthesis via salvage pathway; AMP from ADP: step 1/1.</text>
</comment>
<comment type="subunit">
    <text evidence="1">Monomer.</text>
</comment>
<comment type="subcellular location">
    <subcellularLocation>
        <location evidence="1">Cytoplasm</location>
    </subcellularLocation>
</comment>
<comment type="domain">
    <text evidence="1">Consists of three domains, a large central CORE domain and two small peripheral domains, NMPbind and LID, which undergo movements during catalysis. The LID domain closes over the site of phosphoryl transfer upon ATP binding. Assembling and dissambling the active center during each catalytic cycle provides an effective means to prevent ATP hydrolysis.</text>
</comment>
<comment type="similarity">
    <text evidence="1">Belongs to the adenylate kinase family.</text>
</comment>
<evidence type="ECO:0000255" key="1">
    <source>
        <dbReference type="HAMAP-Rule" id="MF_00235"/>
    </source>
</evidence>
<protein>
    <recommendedName>
        <fullName evidence="1">Adenylate kinase</fullName>
        <shortName evidence="1">AK</shortName>
        <ecNumber evidence="1">2.7.4.3</ecNumber>
    </recommendedName>
    <alternativeName>
        <fullName evidence="1">ATP-AMP transphosphorylase</fullName>
    </alternativeName>
    <alternativeName>
        <fullName evidence="1">ATP:AMP phosphotransferase</fullName>
    </alternativeName>
    <alternativeName>
        <fullName evidence="1">Adenylate monophosphate kinase</fullName>
    </alternativeName>
</protein>
<accession>Q13UR8</accession>
<proteinExistence type="inferred from homology"/>
<feature type="chain" id="PRO_1000058807" description="Adenylate kinase">
    <location>
        <begin position="1"/>
        <end position="221"/>
    </location>
</feature>
<feature type="region of interest" description="NMP" evidence="1">
    <location>
        <begin position="30"/>
        <end position="59"/>
    </location>
</feature>
<feature type="region of interest" description="LID" evidence="1">
    <location>
        <begin position="122"/>
        <end position="159"/>
    </location>
</feature>
<feature type="binding site" evidence="1">
    <location>
        <begin position="10"/>
        <end position="15"/>
    </location>
    <ligand>
        <name>ATP</name>
        <dbReference type="ChEBI" id="CHEBI:30616"/>
    </ligand>
</feature>
<feature type="binding site" evidence="1">
    <location>
        <position position="31"/>
    </location>
    <ligand>
        <name>AMP</name>
        <dbReference type="ChEBI" id="CHEBI:456215"/>
    </ligand>
</feature>
<feature type="binding site" evidence="1">
    <location>
        <position position="36"/>
    </location>
    <ligand>
        <name>AMP</name>
        <dbReference type="ChEBI" id="CHEBI:456215"/>
    </ligand>
</feature>
<feature type="binding site" evidence="1">
    <location>
        <begin position="57"/>
        <end position="59"/>
    </location>
    <ligand>
        <name>AMP</name>
        <dbReference type="ChEBI" id="CHEBI:456215"/>
    </ligand>
</feature>
<feature type="binding site" evidence="1">
    <location>
        <begin position="85"/>
        <end position="88"/>
    </location>
    <ligand>
        <name>AMP</name>
        <dbReference type="ChEBI" id="CHEBI:456215"/>
    </ligand>
</feature>
<feature type="binding site" evidence="1">
    <location>
        <position position="92"/>
    </location>
    <ligand>
        <name>AMP</name>
        <dbReference type="ChEBI" id="CHEBI:456215"/>
    </ligand>
</feature>
<feature type="binding site" evidence="1">
    <location>
        <position position="123"/>
    </location>
    <ligand>
        <name>ATP</name>
        <dbReference type="ChEBI" id="CHEBI:30616"/>
    </ligand>
</feature>
<feature type="binding site" evidence="1">
    <location>
        <begin position="132"/>
        <end position="133"/>
    </location>
    <ligand>
        <name>ATP</name>
        <dbReference type="ChEBI" id="CHEBI:30616"/>
    </ligand>
</feature>
<feature type="binding site" evidence="1">
    <location>
        <position position="156"/>
    </location>
    <ligand>
        <name>AMP</name>
        <dbReference type="ChEBI" id="CHEBI:456215"/>
    </ligand>
</feature>
<feature type="binding site" evidence="1">
    <location>
        <position position="167"/>
    </location>
    <ligand>
        <name>AMP</name>
        <dbReference type="ChEBI" id="CHEBI:456215"/>
    </ligand>
</feature>
<feature type="binding site" evidence="1">
    <location>
        <position position="207"/>
    </location>
    <ligand>
        <name>ATP</name>
        <dbReference type="ChEBI" id="CHEBI:30616"/>
    </ligand>
</feature>
<dbReference type="EC" id="2.7.4.3" evidence="1"/>
<dbReference type="EMBL" id="CP000270">
    <property type="protein sequence ID" value="ABE32171.1"/>
    <property type="molecule type" value="Genomic_DNA"/>
</dbReference>
<dbReference type="RefSeq" id="WP_011489670.1">
    <property type="nucleotide sequence ID" value="NC_007951.1"/>
</dbReference>
<dbReference type="SMR" id="Q13UR8"/>
<dbReference type="STRING" id="266265.Bxe_A0763"/>
<dbReference type="KEGG" id="bxb:DR64_2931"/>
<dbReference type="KEGG" id="bxe:Bxe_A0763"/>
<dbReference type="PATRIC" id="fig|266265.5.peg.3829"/>
<dbReference type="eggNOG" id="COG0563">
    <property type="taxonomic scope" value="Bacteria"/>
</dbReference>
<dbReference type="OrthoDB" id="9805030at2"/>
<dbReference type="UniPathway" id="UPA00588">
    <property type="reaction ID" value="UER00649"/>
</dbReference>
<dbReference type="Proteomes" id="UP000001817">
    <property type="component" value="Chromosome 1"/>
</dbReference>
<dbReference type="GO" id="GO:0005737">
    <property type="term" value="C:cytoplasm"/>
    <property type="evidence" value="ECO:0007669"/>
    <property type="project" value="UniProtKB-SubCell"/>
</dbReference>
<dbReference type="GO" id="GO:0004017">
    <property type="term" value="F:adenylate kinase activity"/>
    <property type="evidence" value="ECO:0007669"/>
    <property type="project" value="UniProtKB-UniRule"/>
</dbReference>
<dbReference type="GO" id="GO:0005524">
    <property type="term" value="F:ATP binding"/>
    <property type="evidence" value="ECO:0007669"/>
    <property type="project" value="UniProtKB-UniRule"/>
</dbReference>
<dbReference type="GO" id="GO:0044209">
    <property type="term" value="P:AMP salvage"/>
    <property type="evidence" value="ECO:0007669"/>
    <property type="project" value="UniProtKB-UniRule"/>
</dbReference>
<dbReference type="CDD" id="cd01428">
    <property type="entry name" value="ADK"/>
    <property type="match status" value="1"/>
</dbReference>
<dbReference type="FunFam" id="3.40.50.300:FF:000106">
    <property type="entry name" value="Adenylate kinase mitochondrial"/>
    <property type="match status" value="1"/>
</dbReference>
<dbReference type="Gene3D" id="3.40.50.300">
    <property type="entry name" value="P-loop containing nucleotide triphosphate hydrolases"/>
    <property type="match status" value="1"/>
</dbReference>
<dbReference type="HAMAP" id="MF_00235">
    <property type="entry name" value="Adenylate_kinase_Adk"/>
    <property type="match status" value="1"/>
</dbReference>
<dbReference type="InterPro" id="IPR006259">
    <property type="entry name" value="Adenyl_kin_sub"/>
</dbReference>
<dbReference type="InterPro" id="IPR000850">
    <property type="entry name" value="Adenylat/UMP-CMP_kin"/>
</dbReference>
<dbReference type="InterPro" id="IPR033690">
    <property type="entry name" value="Adenylat_kinase_CS"/>
</dbReference>
<dbReference type="InterPro" id="IPR007862">
    <property type="entry name" value="Adenylate_kinase_lid-dom"/>
</dbReference>
<dbReference type="InterPro" id="IPR027417">
    <property type="entry name" value="P-loop_NTPase"/>
</dbReference>
<dbReference type="NCBIfam" id="TIGR01351">
    <property type="entry name" value="adk"/>
    <property type="match status" value="1"/>
</dbReference>
<dbReference type="NCBIfam" id="NF001379">
    <property type="entry name" value="PRK00279.1-1"/>
    <property type="match status" value="1"/>
</dbReference>
<dbReference type="NCBIfam" id="NF001380">
    <property type="entry name" value="PRK00279.1-2"/>
    <property type="match status" value="1"/>
</dbReference>
<dbReference type="NCBIfam" id="NF001381">
    <property type="entry name" value="PRK00279.1-3"/>
    <property type="match status" value="1"/>
</dbReference>
<dbReference type="NCBIfam" id="NF011100">
    <property type="entry name" value="PRK14527.1"/>
    <property type="match status" value="1"/>
</dbReference>
<dbReference type="PANTHER" id="PTHR23359">
    <property type="entry name" value="NUCLEOTIDE KINASE"/>
    <property type="match status" value="1"/>
</dbReference>
<dbReference type="Pfam" id="PF00406">
    <property type="entry name" value="ADK"/>
    <property type="match status" value="1"/>
</dbReference>
<dbReference type="Pfam" id="PF05191">
    <property type="entry name" value="ADK_lid"/>
    <property type="match status" value="1"/>
</dbReference>
<dbReference type="PRINTS" id="PR00094">
    <property type="entry name" value="ADENYLTKNASE"/>
</dbReference>
<dbReference type="SUPFAM" id="SSF52540">
    <property type="entry name" value="P-loop containing nucleoside triphosphate hydrolases"/>
    <property type="match status" value="1"/>
</dbReference>
<dbReference type="PROSITE" id="PS00113">
    <property type="entry name" value="ADENYLATE_KINASE"/>
    <property type="match status" value="1"/>
</dbReference>
<keyword id="KW-0067">ATP-binding</keyword>
<keyword id="KW-0963">Cytoplasm</keyword>
<keyword id="KW-0418">Kinase</keyword>
<keyword id="KW-0545">Nucleotide biosynthesis</keyword>
<keyword id="KW-0547">Nucleotide-binding</keyword>
<keyword id="KW-1185">Reference proteome</keyword>
<keyword id="KW-0808">Transferase</keyword>
<gene>
    <name evidence="1" type="primary">adk</name>
    <name type="ordered locus">Bxeno_A3633</name>
    <name type="ORF">Bxe_A0763</name>
</gene>
<sequence>MRLILLGAPGAGKGTQATFIKEKFGIPQISTGDMLRAAVKAGTPLGLEAKRFMDAGELVTDELIINLVKERLQQPDCANGYLFDGFPRTIPQAEAMKQAGVAIDYVLEIDVPFEEIIVRMSGRRSHAASGRTYHVKFNPPKVEGLDDVTGEPLIQRDDDKEETVKKRLEVYEAQTKPLIEYYTNWAKNGDSSTPLKAPQYRRISGLGSVDEIRERAFEALK</sequence>
<name>KAD_PARXL</name>